<evidence type="ECO:0000255" key="1">
    <source>
        <dbReference type="HAMAP-Rule" id="MF_00558"/>
    </source>
</evidence>
<gene>
    <name evidence="1" type="primary">sucC</name>
    <name type="ordered locus">SSPA1867</name>
</gene>
<organism>
    <name type="scientific">Salmonella paratyphi A (strain AKU_12601)</name>
    <dbReference type="NCBI Taxonomy" id="554290"/>
    <lineage>
        <taxon>Bacteria</taxon>
        <taxon>Pseudomonadati</taxon>
        <taxon>Pseudomonadota</taxon>
        <taxon>Gammaproteobacteria</taxon>
        <taxon>Enterobacterales</taxon>
        <taxon>Enterobacteriaceae</taxon>
        <taxon>Salmonella</taxon>
    </lineage>
</organism>
<dbReference type="EC" id="6.2.1.5" evidence="1"/>
<dbReference type="EMBL" id="FM200053">
    <property type="protein sequence ID" value="CAR60064.1"/>
    <property type="molecule type" value="Genomic_DNA"/>
</dbReference>
<dbReference type="RefSeq" id="WP_001048590.1">
    <property type="nucleotide sequence ID" value="NC_011147.1"/>
</dbReference>
<dbReference type="SMR" id="B5BC72"/>
<dbReference type="KEGG" id="sek:SSPA1867"/>
<dbReference type="HOGENOM" id="CLU_037430_4_0_6"/>
<dbReference type="UniPathway" id="UPA00223">
    <property type="reaction ID" value="UER00999"/>
</dbReference>
<dbReference type="Proteomes" id="UP000001869">
    <property type="component" value="Chromosome"/>
</dbReference>
<dbReference type="GO" id="GO:0005829">
    <property type="term" value="C:cytosol"/>
    <property type="evidence" value="ECO:0007669"/>
    <property type="project" value="TreeGrafter"/>
</dbReference>
<dbReference type="GO" id="GO:0042709">
    <property type="term" value="C:succinate-CoA ligase complex"/>
    <property type="evidence" value="ECO:0007669"/>
    <property type="project" value="TreeGrafter"/>
</dbReference>
<dbReference type="GO" id="GO:0005524">
    <property type="term" value="F:ATP binding"/>
    <property type="evidence" value="ECO:0007669"/>
    <property type="project" value="UniProtKB-UniRule"/>
</dbReference>
<dbReference type="GO" id="GO:0000287">
    <property type="term" value="F:magnesium ion binding"/>
    <property type="evidence" value="ECO:0007669"/>
    <property type="project" value="UniProtKB-UniRule"/>
</dbReference>
<dbReference type="GO" id="GO:0004775">
    <property type="term" value="F:succinate-CoA ligase (ADP-forming) activity"/>
    <property type="evidence" value="ECO:0007669"/>
    <property type="project" value="UniProtKB-UniRule"/>
</dbReference>
<dbReference type="GO" id="GO:0004776">
    <property type="term" value="F:succinate-CoA ligase (GDP-forming) activity"/>
    <property type="evidence" value="ECO:0007669"/>
    <property type="project" value="RHEA"/>
</dbReference>
<dbReference type="GO" id="GO:0006104">
    <property type="term" value="P:succinyl-CoA metabolic process"/>
    <property type="evidence" value="ECO:0007669"/>
    <property type="project" value="TreeGrafter"/>
</dbReference>
<dbReference type="GO" id="GO:0006099">
    <property type="term" value="P:tricarboxylic acid cycle"/>
    <property type="evidence" value="ECO:0007669"/>
    <property type="project" value="UniProtKB-UniRule"/>
</dbReference>
<dbReference type="FunFam" id="3.30.1490.20:FF:000002">
    <property type="entry name" value="Succinate--CoA ligase [ADP-forming] subunit beta"/>
    <property type="match status" value="1"/>
</dbReference>
<dbReference type="FunFam" id="3.30.470.20:FF:000002">
    <property type="entry name" value="Succinate--CoA ligase [ADP-forming] subunit beta"/>
    <property type="match status" value="1"/>
</dbReference>
<dbReference type="FunFam" id="3.40.50.261:FF:000001">
    <property type="entry name" value="Succinate--CoA ligase [ADP-forming] subunit beta"/>
    <property type="match status" value="1"/>
</dbReference>
<dbReference type="Gene3D" id="3.30.1490.20">
    <property type="entry name" value="ATP-grasp fold, A domain"/>
    <property type="match status" value="1"/>
</dbReference>
<dbReference type="Gene3D" id="3.30.470.20">
    <property type="entry name" value="ATP-grasp fold, B domain"/>
    <property type="match status" value="1"/>
</dbReference>
<dbReference type="Gene3D" id="3.40.50.261">
    <property type="entry name" value="Succinyl-CoA synthetase domains"/>
    <property type="match status" value="1"/>
</dbReference>
<dbReference type="HAMAP" id="MF_00558">
    <property type="entry name" value="Succ_CoA_beta"/>
    <property type="match status" value="1"/>
</dbReference>
<dbReference type="InterPro" id="IPR011761">
    <property type="entry name" value="ATP-grasp"/>
</dbReference>
<dbReference type="InterPro" id="IPR013650">
    <property type="entry name" value="ATP-grasp_succ-CoA_synth-type"/>
</dbReference>
<dbReference type="InterPro" id="IPR013815">
    <property type="entry name" value="ATP_grasp_subdomain_1"/>
</dbReference>
<dbReference type="InterPro" id="IPR017866">
    <property type="entry name" value="Succ-CoA_synthase_bsu_CS"/>
</dbReference>
<dbReference type="InterPro" id="IPR005811">
    <property type="entry name" value="SUCC_ACL_C"/>
</dbReference>
<dbReference type="InterPro" id="IPR005809">
    <property type="entry name" value="Succ_CoA_ligase-like_bsu"/>
</dbReference>
<dbReference type="InterPro" id="IPR016102">
    <property type="entry name" value="Succinyl-CoA_synth-like"/>
</dbReference>
<dbReference type="NCBIfam" id="NF001913">
    <property type="entry name" value="PRK00696.1"/>
    <property type="match status" value="1"/>
</dbReference>
<dbReference type="NCBIfam" id="TIGR01016">
    <property type="entry name" value="sucCoAbeta"/>
    <property type="match status" value="1"/>
</dbReference>
<dbReference type="PANTHER" id="PTHR11815:SF10">
    <property type="entry name" value="SUCCINATE--COA LIGASE [GDP-FORMING] SUBUNIT BETA, MITOCHONDRIAL"/>
    <property type="match status" value="1"/>
</dbReference>
<dbReference type="PANTHER" id="PTHR11815">
    <property type="entry name" value="SUCCINYL-COA SYNTHETASE BETA CHAIN"/>
    <property type="match status" value="1"/>
</dbReference>
<dbReference type="Pfam" id="PF08442">
    <property type="entry name" value="ATP-grasp_2"/>
    <property type="match status" value="1"/>
</dbReference>
<dbReference type="Pfam" id="PF00549">
    <property type="entry name" value="Ligase_CoA"/>
    <property type="match status" value="1"/>
</dbReference>
<dbReference type="PIRSF" id="PIRSF001554">
    <property type="entry name" value="SucCS_beta"/>
    <property type="match status" value="1"/>
</dbReference>
<dbReference type="SUPFAM" id="SSF56059">
    <property type="entry name" value="Glutathione synthetase ATP-binding domain-like"/>
    <property type="match status" value="1"/>
</dbReference>
<dbReference type="SUPFAM" id="SSF52210">
    <property type="entry name" value="Succinyl-CoA synthetase domains"/>
    <property type="match status" value="1"/>
</dbReference>
<dbReference type="PROSITE" id="PS50975">
    <property type="entry name" value="ATP_GRASP"/>
    <property type="match status" value="1"/>
</dbReference>
<dbReference type="PROSITE" id="PS01217">
    <property type="entry name" value="SUCCINYL_COA_LIG_3"/>
    <property type="match status" value="1"/>
</dbReference>
<name>SUCC_SALPK</name>
<proteinExistence type="inferred from homology"/>
<keyword id="KW-0067">ATP-binding</keyword>
<keyword id="KW-0436">Ligase</keyword>
<keyword id="KW-0460">Magnesium</keyword>
<keyword id="KW-0479">Metal-binding</keyword>
<keyword id="KW-0547">Nucleotide-binding</keyword>
<keyword id="KW-0816">Tricarboxylic acid cycle</keyword>
<comment type="function">
    <text evidence="1">Succinyl-CoA synthetase functions in the citric acid cycle (TCA), coupling the hydrolysis of succinyl-CoA to the synthesis of either ATP or GTP and thus represents the only step of substrate-level phosphorylation in the TCA. The beta subunit provides nucleotide specificity of the enzyme and binds the substrate succinate, while the binding sites for coenzyme A and phosphate are found in the alpha subunit.</text>
</comment>
<comment type="catalytic activity">
    <reaction evidence="1">
        <text>succinate + ATP + CoA = succinyl-CoA + ADP + phosphate</text>
        <dbReference type="Rhea" id="RHEA:17661"/>
        <dbReference type="ChEBI" id="CHEBI:30031"/>
        <dbReference type="ChEBI" id="CHEBI:30616"/>
        <dbReference type="ChEBI" id="CHEBI:43474"/>
        <dbReference type="ChEBI" id="CHEBI:57287"/>
        <dbReference type="ChEBI" id="CHEBI:57292"/>
        <dbReference type="ChEBI" id="CHEBI:456216"/>
        <dbReference type="EC" id="6.2.1.5"/>
    </reaction>
    <physiologicalReaction direction="right-to-left" evidence="1">
        <dbReference type="Rhea" id="RHEA:17663"/>
    </physiologicalReaction>
</comment>
<comment type="catalytic activity">
    <reaction evidence="1">
        <text>GTP + succinate + CoA = succinyl-CoA + GDP + phosphate</text>
        <dbReference type="Rhea" id="RHEA:22120"/>
        <dbReference type="ChEBI" id="CHEBI:30031"/>
        <dbReference type="ChEBI" id="CHEBI:37565"/>
        <dbReference type="ChEBI" id="CHEBI:43474"/>
        <dbReference type="ChEBI" id="CHEBI:57287"/>
        <dbReference type="ChEBI" id="CHEBI:57292"/>
        <dbReference type="ChEBI" id="CHEBI:58189"/>
    </reaction>
    <physiologicalReaction direction="right-to-left" evidence="1">
        <dbReference type="Rhea" id="RHEA:22122"/>
    </physiologicalReaction>
</comment>
<comment type="cofactor">
    <cofactor evidence="1">
        <name>Mg(2+)</name>
        <dbReference type="ChEBI" id="CHEBI:18420"/>
    </cofactor>
    <text evidence="1">Binds 1 Mg(2+) ion per subunit.</text>
</comment>
<comment type="pathway">
    <text evidence="1">Carbohydrate metabolism; tricarboxylic acid cycle; succinate from succinyl-CoA (ligase route): step 1/1.</text>
</comment>
<comment type="subunit">
    <text evidence="1">Heterotetramer of two alpha and two beta subunits.</text>
</comment>
<comment type="similarity">
    <text evidence="1">Belongs to the succinate/malate CoA ligase beta subunit family.</text>
</comment>
<sequence length="388" mass="41481">MNLHEYQAKQLFARYGLPAPVGYACTTPREAEEAASKIGAGPWVVKCQVHAGGRGKAGGVKVVKSKEEIRAFAENWLGKRLVTYQTDANGQPVNQILVEAATDIGKELYLGAVVDRSSRRVVFMASTEGGVEIEKVAEETPHLIHKVALDPLTGPMPYQGRELAFKLGLEGKLVQQFTKIFMGLATIFLERDLALIEINPLVITKQGDLICLDGKLGADGNALFRQPDLREMRDQSQEDPREAQAAQWELNYVALDGNIGCMVNGAGLAMGTMDIVKLHGGEPANFLDVGGGATKERVTEAFKIILSDDNVKAVLVNIFGGIVRCDLIADGIIGAVEEVGVNVPVVVRLEGNNAELGAKKLADSGLNIIAAKSLTDAAQQVVAAVEGK</sequence>
<feature type="chain" id="PRO_1000129226" description="Succinate--CoA ligase [ADP-forming] subunit beta">
    <location>
        <begin position="1"/>
        <end position="388"/>
    </location>
</feature>
<feature type="domain" description="ATP-grasp" evidence="1">
    <location>
        <begin position="9"/>
        <end position="244"/>
    </location>
</feature>
<feature type="binding site" evidence="1">
    <location>
        <position position="46"/>
    </location>
    <ligand>
        <name>ATP</name>
        <dbReference type="ChEBI" id="CHEBI:30616"/>
    </ligand>
</feature>
<feature type="binding site" evidence="1">
    <location>
        <begin position="53"/>
        <end position="55"/>
    </location>
    <ligand>
        <name>ATP</name>
        <dbReference type="ChEBI" id="CHEBI:30616"/>
    </ligand>
</feature>
<feature type="binding site" evidence="1">
    <location>
        <position position="99"/>
    </location>
    <ligand>
        <name>ATP</name>
        <dbReference type="ChEBI" id="CHEBI:30616"/>
    </ligand>
</feature>
<feature type="binding site" evidence="1">
    <location>
        <position position="102"/>
    </location>
    <ligand>
        <name>ATP</name>
        <dbReference type="ChEBI" id="CHEBI:30616"/>
    </ligand>
</feature>
<feature type="binding site" evidence="1">
    <location>
        <position position="107"/>
    </location>
    <ligand>
        <name>ATP</name>
        <dbReference type="ChEBI" id="CHEBI:30616"/>
    </ligand>
</feature>
<feature type="binding site" evidence="1">
    <location>
        <position position="199"/>
    </location>
    <ligand>
        <name>Mg(2+)</name>
        <dbReference type="ChEBI" id="CHEBI:18420"/>
    </ligand>
</feature>
<feature type="binding site" evidence="1">
    <location>
        <position position="213"/>
    </location>
    <ligand>
        <name>Mg(2+)</name>
        <dbReference type="ChEBI" id="CHEBI:18420"/>
    </ligand>
</feature>
<feature type="binding site" evidence="1">
    <location>
        <position position="264"/>
    </location>
    <ligand>
        <name>substrate</name>
        <note>ligand shared with subunit alpha</note>
    </ligand>
</feature>
<feature type="binding site" evidence="1">
    <location>
        <begin position="321"/>
        <end position="323"/>
    </location>
    <ligand>
        <name>substrate</name>
        <note>ligand shared with subunit alpha</note>
    </ligand>
</feature>
<accession>B5BC72</accession>
<protein>
    <recommendedName>
        <fullName evidence="1">Succinate--CoA ligase [ADP-forming] subunit beta</fullName>
        <ecNumber evidence="1">6.2.1.5</ecNumber>
    </recommendedName>
    <alternativeName>
        <fullName evidence="1">Succinyl-CoA synthetase subunit beta</fullName>
        <shortName evidence="1">SCS-beta</shortName>
    </alternativeName>
</protein>
<reference key="1">
    <citation type="journal article" date="2009" name="BMC Genomics">
        <title>Pseudogene accumulation in the evolutionary histories of Salmonella enterica serovars Paratyphi A and Typhi.</title>
        <authorList>
            <person name="Holt K.E."/>
            <person name="Thomson N.R."/>
            <person name="Wain J."/>
            <person name="Langridge G.C."/>
            <person name="Hasan R."/>
            <person name="Bhutta Z.A."/>
            <person name="Quail M.A."/>
            <person name="Norbertczak H."/>
            <person name="Walker D."/>
            <person name="Simmonds M."/>
            <person name="White B."/>
            <person name="Bason N."/>
            <person name="Mungall K."/>
            <person name="Dougan G."/>
            <person name="Parkhill J."/>
        </authorList>
    </citation>
    <scope>NUCLEOTIDE SEQUENCE [LARGE SCALE GENOMIC DNA]</scope>
    <source>
        <strain>AKU_12601</strain>
    </source>
</reference>